<feature type="chain" id="PRO_0000252344" description="ER lumen protein-retaining receptor 1-A">
    <location>
        <begin position="1"/>
        <end position="212"/>
    </location>
</feature>
<feature type="topological domain" description="Lumenal" evidence="5">
    <location>
        <begin position="1"/>
        <end position="4"/>
    </location>
</feature>
<feature type="transmembrane region" description="Helical" evidence="4">
    <location>
        <begin position="5"/>
        <end position="24"/>
    </location>
</feature>
<feature type="topological domain" description="Cytoplasmic" evidence="5">
    <location>
        <begin position="25"/>
        <end position="32"/>
    </location>
</feature>
<feature type="transmembrane region" description="Helical" evidence="4">
    <location>
        <begin position="33"/>
        <end position="52"/>
    </location>
</feature>
<feature type="topological domain" description="Lumenal" evidence="5">
    <location>
        <begin position="53"/>
        <end position="58"/>
    </location>
</feature>
<feature type="transmembrane region" description="Helical" evidence="4">
    <location>
        <begin position="59"/>
        <end position="79"/>
    </location>
</feature>
<feature type="topological domain" description="Cytoplasmic" evidence="5">
    <location>
        <begin position="80"/>
        <end position="92"/>
    </location>
</feature>
<feature type="transmembrane region" description="Helical" evidence="4">
    <location>
        <begin position="93"/>
        <end position="110"/>
    </location>
</feature>
<feature type="topological domain" description="Lumenal" evidence="5">
    <location>
        <begin position="111"/>
        <end position="116"/>
    </location>
</feature>
<feature type="transmembrane region" description="Helical" evidence="4">
    <location>
        <begin position="117"/>
        <end position="135"/>
    </location>
</feature>
<feature type="topological domain" description="Cytoplasmic" evidence="5">
    <location>
        <begin position="136"/>
        <end position="149"/>
    </location>
</feature>
<feature type="transmembrane region" description="Helical" evidence="4">
    <location>
        <begin position="150"/>
        <end position="168"/>
    </location>
</feature>
<feature type="topological domain" description="Lumenal" evidence="5">
    <location>
        <begin position="169"/>
        <end position="178"/>
    </location>
</feature>
<feature type="transmembrane region" description="Helical" evidence="4">
    <location>
        <begin position="179"/>
        <end position="199"/>
    </location>
</feature>
<feature type="topological domain" description="Cytoplasmic" evidence="5">
    <location>
        <begin position="200"/>
        <end position="212"/>
    </location>
</feature>
<feature type="region of interest" description="Interaction with the K-D-E-L motif on target proteins" evidence="4">
    <location>
        <begin position="47"/>
        <end position="48"/>
    </location>
</feature>
<feature type="region of interest" description="Interaction with the K-D-E-L motif on target proteins" evidence="4">
    <location>
        <begin position="159"/>
        <end position="169"/>
    </location>
</feature>
<feature type="region of interest" description="Important for recycling of cargo proteins with the sequence motif K-D-E-L from the Golgi to the endoplasmic reticulum" evidence="3">
    <location>
        <begin position="204"/>
        <end position="207"/>
    </location>
</feature>
<feature type="site" description="Interaction with the K-D-E-L motif on target proteins" evidence="4">
    <location>
        <position position="5"/>
    </location>
</feature>
<feature type="site" description="Interaction with the K-D-E-L motif on target proteins" evidence="4">
    <location>
        <position position="117"/>
    </location>
</feature>
<feature type="site" description="Important for recycling of cargo proteins with the sequence motif K-D-E-L from the Golgi to the endoplasmic reticulum" evidence="1">
    <location>
        <position position="193"/>
    </location>
</feature>
<reference key="1">
    <citation type="submission" date="2003-10" db="EMBL/GenBank/DDBJ databases">
        <authorList>
            <consortium name="NIH - Xenopus Gene Collection (XGC) project"/>
        </authorList>
    </citation>
    <scope>NUCLEOTIDE SEQUENCE [LARGE SCALE MRNA]</scope>
    <source>
        <tissue>Kidney</tissue>
    </source>
</reference>
<keyword id="KW-0968">Cytoplasmic vesicle</keyword>
<keyword id="KW-0256">Endoplasmic reticulum</keyword>
<keyword id="KW-0931">ER-Golgi transport</keyword>
<keyword id="KW-0333">Golgi apparatus</keyword>
<keyword id="KW-0472">Membrane</keyword>
<keyword id="KW-0653">Protein transport</keyword>
<keyword id="KW-0675">Receptor</keyword>
<keyword id="KW-1185">Reference proteome</keyword>
<keyword id="KW-0812">Transmembrane</keyword>
<keyword id="KW-1133">Transmembrane helix</keyword>
<keyword id="KW-0813">Transport</keyword>
<dbReference type="EMBL" id="BC060380">
    <property type="protein sequence ID" value="AAH60380.1"/>
    <property type="molecule type" value="mRNA"/>
</dbReference>
<dbReference type="SMR" id="Q6PAB8"/>
<dbReference type="GeneID" id="398905"/>
<dbReference type="KEGG" id="xla:398905"/>
<dbReference type="AGR" id="Xenbase:XB-GENE-943541"/>
<dbReference type="CTD" id="398905"/>
<dbReference type="Xenbase" id="XB-GENE-943541">
    <property type="gene designation" value="kdelr1.S"/>
</dbReference>
<dbReference type="OMA" id="YAEDHYD"/>
<dbReference type="OrthoDB" id="7694678at2759"/>
<dbReference type="Proteomes" id="UP000186698">
    <property type="component" value="Chromosome 7S"/>
</dbReference>
<dbReference type="Bgee" id="398905">
    <property type="expression patterns" value="Expressed in zone of skin and 19 other cell types or tissues"/>
</dbReference>
<dbReference type="GO" id="GO:0005801">
    <property type="term" value="C:cis-Golgi network"/>
    <property type="evidence" value="ECO:0000318"/>
    <property type="project" value="GO_Central"/>
</dbReference>
<dbReference type="GO" id="GO:0030663">
    <property type="term" value="C:COPI-coated vesicle membrane"/>
    <property type="evidence" value="ECO:0007669"/>
    <property type="project" value="UniProtKB-SubCell"/>
</dbReference>
<dbReference type="GO" id="GO:0005783">
    <property type="term" value="C:endoplasmic reticulum"/>
    <property type="evidence" value="ECO:0000318"/>
    <property type="project" value="GO_Central"/>
</dbReference>
<dbReference type="GO" id="GO:0005789">
    <property type="term" value="C:endoplasmic reticulum membrane"/>
    <property type="evidence" value="ECO:0007669"/>
    <property type="project" value="UniProtKB-SubCell"/>
</dbReference>
<dbReference type="GO" id="GO:0033116">
    <property type="term" value="C:endoplasmic reticulum-Golgi intermediate compartment membrane"/>
    <property type="evidence" value="ECO:0007669"/>
    <property type="project" value="UniProtKB-SubCell"/>
</dbReference>
<dbReference type="GO" id="GO:0000139">
    <property type="term" value="C:Golgi membrane"/>
    <property type="evidence" value="ECO:0000250"/>
    <property type="project" value="UniProtKB"/>
</dbReference>
<dbReference type="GO" id="GO:0046923">
    <property type="term" value="F:ER retention sequence binding"/>
    <property type="evidence" value="ECO:0000318"/>
    <property type="project" value="GO_Central"/>
</dbReference>
<dbReference type="GO" id="GO:0005046">
    <property type="term" value="F:KDEL sequence binding"/>
    <property type="evidence" value="ECO:0000250"/>
    <property type="project" value="UniProtKB"/>
</dbReference>
<dbReference type="GO" id="GO:0006621">
    <property type="term" value="P:protein retention in ER lumen"/>
    <property type="evidence" value="ECO:0000318"/>
    <property type="project" value="GO_Central"/>
</dbReference>
<dbReference type="GO" id="GO:0015031">
    <property type="term" value="P:protein transport"/>
    <property type="evidence" value="ECO:0007669"/>
    <property type="project" value="UniProtKB-KW"/>
</dbReference>
<dbReference type="GO" id="GO:0006890">
    <property type="term" value="P:retrograde vesicle-mediated transport, Golgi to endoplasmic reticulum"/>
    <property type="evidence" value="ECO:0000250"/>
    <property type="project" value="UniProtKB"/>
</dbReference>
<dbReference type="InterPro" id="IPR000133">
    <property type="entry name" value="ER_ret_rcpt"/>
</dbReference>
<dbReference type="PANTHER" id="PTHR10585">
    <property type="entry name" value="ER LUMEN PROTEIN RETAINING RECEPTOR"/>
    <property type="match status" value="1"/>
</dbReference>
<dbReference type="Pfam" id="PF00810">
    <property type="entry name" value="ER_lumen_recept"/>
    <property type="match status" value="1"/>
</dbReference>
<dbReference type="PRINTS" id="PR00660">
    <property type="entry name" value="ERLUMENR"/>
</dbReference>
<dbReference type="PROSITE" id="PS00951">
    <property type="entry name" value="ER_LUMEN_RECEPTOR_1"/>
    <property type="match status" value="1"/>
</dbReference>
<dbReference type="PROSITE" id="PS00952">
    <property type="entry name" value="ER_LUMEN_RECEPTOR_2"/>
    <property type="match status" value="1"/>
</dbReference>
<gene>
    <name type="primary">kdelr1-a</name>
</gene>
<organism>
    <name type="scientific">Xenopus laevis</name>
    <name type="common">African clawed frog</name>
    <dbReference type="NCBI Taxonomy" id="8355"/>
    <lineage>
        <taxon>Eukaryota</taxon>
        <taxon>Metazoa</taxon>
        <taxon>Chordata</taxon>
        <taxon>Craniata</taxon>
        <taxon>Vertebrata</taxon>
        <taxon>Euteleostomi</taxon>
        <taxon>Amphibia</taxon>
        <taxon>Batrachia</taxon>
        <taxon>Anura</taxon>
        <taxon>Pipoidea</taxon>
        <taxon>Pipidae</taxon>
        <taxon>Xenopodinae</taxon>
        <taxon>Xenopus</taxon>
        <taxon>Xenopus</taxon>
    </lineage>
</organism>
<evidence type="ECO:0000250" key="1">
    <source>
        <dbReference type="UniProtKB" id="P24390"/>
    </source>
</evidence>
<evidence type="ECO:0000250" key="2">
    <source>
        <dbReference type="UniProtKB" id="P33946"/>
    </source>
</evidence>
<evidence type="ECO:0000250" key="3">
    <source>
        <dbReference type="UniProtKB" id="P33947"/>
    </source>
</evidence>
<evidence type="ECO:0000250" key="4">
    <source>
        <dbReference type="UniProtKB" id="Q5ZKX9"/>
    </source>
</evidence>
<evidence type="ECO:0000305" key="5"/>
<comment type="function">
    <text evidence="1">Receptor for the C-terminal sequence motif K-D-E-L that is present on endoplasmic reticulum resident proteins and that mediates their recycling from the Golgi back to the endoplasmic reticulum.</text>
</comment>
<comment type="subcellular location">
    <subcellularLocation>
        <location evidence="2">Golgi apparatus membrane</location>
        <topology evidence="2">Multi-pass membrane protein</topology>
    </subcellularLocation>
    <subcellularLocation>
        <location evidence="2">Cytoplasmic vesicle</location>
        <location evidence="2">COPI-coated vesicle membrane</location>
        <topology evidence="2">Multi-pass membrane protein</topology>
    </subcellularLocation>
    <subcellularLocation>
        <location evidence="2">Endoplasmic reticulum membrane</location>
        <topology evidence="2">Multi-pass membrane protein</topology>
    </subcellularLocation>
    <subcellularLocation>
        <location evidence="2">Endoplasmic reticulum-Golgi intermediate compartment membrane</location>
        <topology evidence="2">Multi-pass membrane protein</topology>
    </subcellularLocation>
    <text evidence="2">Localized in the Golgi in the absence of bound proteins with the sequence motif K-D-E-L. Trafficks back to the endoplasmic reticulum together with cargo proteins containing the sequence motif K-D-E-L.</text>
</comment>
<comment type="similarity">
    <text evidence="5">Belongs to the ERD2 family.</text>
</comment>
<accession>Q6PAB8</accession>
<name>ER21A_XENLA</name>
<protein>
    <recommendedName>
        <fullName>ER lumen protein-retaining receptor 1-A</fullName>
    </recommendedName>
    <alternativeName>
        <fullName>KDEL endoplasmic reticulum protein retention receptor 1-A</fullName>
        <shortName>KDEL receptor 1-A</shortName>
    </alternativeName>
</protein>
<proteinExistence type="evidence at transcript level"/>
<sequence length="212" mass="24609">MNIFRFLGDISHLSAIFILLLKIWKSRSCAGISGKSQLLFAIVFTARYLDLFTNYISFYNTSMKVVYVASSYATVWMIYSKFKATYDGNHDTFRVEFLIVPTAILAFLVNHDFTPLEIFWTFSIYLESVAILPQLFMVSKTGEAETITSHYLFALGIYRTLYLFNWIWRYQFEGFFDLIAIVAGLVQTVLYCDFFYLYVTKVLKGKKLSLPA</sequence>